<name>PURA_CERS5</name>
<gene>
    <name evidence="1" type="primary">purA</name>
    <name type="ordered locus">Rsph17025_0875</name>
</gene>
<feature type="chain" id="PRO_1000000910" description="Adenylosuccinate synthetase">
    <location>
        <begin position="1"/>
        <end position="430"/>
    </location>
</feature>
<feature type="active site" description="Proton acceptor" evidence="1">
    <location>
        <position position="13"/>
    </location>
</feature>
<feature type="active site" description="Proton donor" evidence="1">
    <location>
        <position position="41"/>
    </location>
</feature>
<feature type="binding site" evidence="1">
    <location>
        <begin position="12"/>
        <end position="18"/>
    </location>
    <ligand>
        <name>GTP</name>
        <dbReference type="ChEBI" id="CHEBI:37565"/>
    </ligand>
</feature>
<feature type="binding site" description="in other chain" evidence="1">
    <location>
        <begin position="13"/>
        <end position="16"/>
    </location>
    <ligand>
        <name>IMP</name>
        <dbReference type="ChEBI" id="CHEBI:58053"/>
        <note>ligand shared between dimeric partners</note>
    </ligand>
</feature>
<feature type="binding site" evidence="1">
    <location>
        <position position="13"/>
    </location>
    <ligand>
        <name>Mg(2+)</name>
        <dbReference type="ChEBI" id="CHEBI:18420"/>
    </ligand>
</feature>
<feature type="binding site" description="in other chain" evidence="1">
    <location>
        <begin position="38"/>
        <end position="41"/>
    </location>
    <ligand>
        <name>IMP</name>
        <dbReference type="ChEBI" id="CHEBI:58053"/>
        <note>ligand shared between dimeric partners</note>
    </ligand>
</feature>
<feature type="binding site" evidence="1">
    <location>
        <begin position="40"/>
        <end position="42"/>
    </location>
    <ligand>
        <name>GTP</name>
        <dbReference type="ChEBI" id="CHEBI:37565"/>
    </ligand>
</feature>
<feature type="binding site" evidence="1">
    <location>
        <position position="40"/>
    </location>
    <ligand>
        <name>Mg(2+)</name>
        <dbReference type="ChEBI" id="CHEBI:18420"/>
    </ligand>
</feature>
<feature type="binding site" description="in other chain" evidence="1">
    <location>
        <position position="130"/>
    </location>
    <ligand>
        <name>IMP</name>
        <dbReference type="ChEBI" id="CHEBI:58053"/>
        <note>ligand shared between dimeric partners</note>
    </ligand>
</feature>
<feature type="binding site" evidence="1">
    <location>
        <position position="144"/>
    </location>
    <ligand>
        <name>IMP</name>
        <dbReference type="ChEBI" id="CHEBI:58053"/>
        <note>ligand shared between dimeric partners</note>
    </ligand>
</feature>
<feature type="binding site" description="in other chain" evidence="1">
    <location>
        <position position="224"/>
    </location>
    <ligand>
        <name>IMP</name>
        <dbReference type="ChEBI" id="CHEBI:58053"/>
        <note>ligand shared between dimeric partners</note>
    </ligand>
</feature>
<feature type="binding site" description="in other chain" evidence="1">
    <location>
        <position position="239"/>
    </location>
    <ligand>
        <name>IMP</name>
        <dbReference type="ChEBI" id="CHEBI:58053"/>
        <note>ligand shared between dimeric partners</note>
    </ligand>
</feature>
<feature type="binding site" evidence="1">
    <location>
        <begin position="299"/>
        <end position="305"/>
    </location>
    <ligand>
        <name>substrate</name>
    </ligand>
</feature>
<feature type="binding site" description="in other chain" evidence="1">
    <location>
        <position position="303"/>
    </location>
    <ligand>
        <name>IMP</name>
        <dbReference type="ChEBI" id="CHEBI:58053"/>
        <note>ligand shared between dimeric partners</note>
    </ligand>
</feature>
<feature type="binding site" evidence="1">
    <location>
        <position position="305"/>
    </location>
    <ligand>
        <name>GTP</name>
        <dbReference type="ChEBI" id="CHEBI:37565"/>
    </ligand>
</feature>
<feature type="binding site" evidence="1">
    <location>
        <begin position="331"/>
        <end position="333"/>
    </location>
    <ligand>
        <name>GTP</name>
        <dbReference type="ChEBI" id="CHEBI:37565"/>
    </ligand>
</feature>
<feature type="binding site" evidence="1">
    <location>
        <begin position="413"/>
        <end position="415"/>
    </location>
    <ligand>
        <name>GTP</name>
        <dbReference type="ChEBI" id="CHEBI:37565"/>
    </ligand>
</feature>
<accession>A4WQW4</accession>
<evidence type="ECO:0000255" key="1">
    <source>
        <dbReference type="HAMAP-Rule" id="MF_00011"/>
    </source>
</evidence>
<protein>
    <recommendedName>
        <fullName evidence="1">Adenylosuccinate synthetase</fullName>
        <shortName evidence="1">AMPSase</shortName>
        <shortName evidence="1">AdSS</shortName>
        <ecNumber evidence="1">6.3.4.4</ecNumber>
    </recommendedName>
    <alternativeName>
        <fullName evidence="1">IMP--aspartate ligase</fullName>
    </alternativeName>
</protein>
<sequence>MANVVVVGAQWGDEGKGKIVDWLSERADVIARFQGGHNAGHTLVIDGKVYKLSLLPSGIVRPGKLSVIGNGVVLDPWHLVGEIAKLRGEGVEITPDNLMIAENAVLILPLHGELDRARESHNAVAKIGTTGRGIGPAYEDKVGRRAIRVADLADEATLALRVDRLMVHHDALRRGLGIEPIDREALLAQLREIAPQVLPYAKPVWKVMNEMRKAGKRILFEGAQGALLDIDFGTYPFVTSSNVIAGQAATGTGIGPGAIGFVLGIVKAYTTRVGEGPFPAELKDADGERLGERGREFGTVTGRKRRCGWFDAVLVRQTCATSGVSGIALTKLDVLDGFETLKICVGYDLDGERLDHLPIAADQQARCTPIYEELEGWSESTAGARSWADLPGAAVKYVRRIEELIQCPVALLSTSPERDDTILVTDPFED</sequence>
<comment type="function">
    <text evidence="1">Plays an important role in the de novo pathway of purine nucleotide biosynthesis. Catalyzes the first committed step in the biosynthesis of AMP from IMP.</text>
</comment>
<comment type="catalytic activity">
    <reaction evidence="1">
        <text>IMP + L-aspartate + GTP = N(6)-(1,2-dicarboxyethyl)-AMP + GDP + phosphate + 2 H(+)</text>
        <dbReference type="Rhea" id="RHEA:15753"/>
        <dbReference type="ChEBI" id="CHEBI:15378"/>
        <dbReference type="ChEBI" id="CHEBI:29991"/>
        <dbReference type="ChEBI" id="CHEBI:37565"/>
        <dbReference type="ChEBI" id="CHEBI:43474"/>
        <dbReference type="ChEBI" id="CHEBI:57567"/>
        <dbReference type="ChEBI" id="CHEBI:58053"/>
        <dbReference type="ChEBI" id="CHEBI:58189"/>
        <dbReference type="EC" id="6.3.4.4"/>
    </reaction>
</comment>
<comment type="cofactor">
    <cofactor evidence="1">
        <name>Mg(2+)</name>
        <dbReference type="ChEBI" id="CHEBI:18420"/>
    </cofactor>
    <text evidence="1">Binds 1 Mg(2+) ion per subunit.</text>
</comment>
<comment type="pathway">
    <text evidence="1">Purine metabolism; AMP biosynthesis via de novo pathway; AMP from IMP: step 1/2.</text>
</comment>
<comment type="subunit">
    <text evidence="1">Homodimer.</text>
</comment>
<comment type="subcellular location">
    <subcellularLocation>
        <location evidence="1">Cytoplasm</location>
    </subcellularLocation>
</comment>
<comment type="similarity">
    <text evidence="1">Belongs to the adenylosuccinate synthetase family.</text>
</comment>
<dbReference type="EC" id="6.3.4.4" evidence="1"/>
<dbReference type="EMBL" id="CP000661">
    <property type="protein sequence ID" value="ABP69778.1"/>
    <property type="molecule type" value="Genomic_DNA"/>
</dbReference>
<dbReference type="SMR" id="A4WQW4"/>
<dbReference type="STRING" id="349102.Rsph17025_0875"/>
<dbReference type="KEGG" id="rsq:Rsph17025_0875"/>
<dbReference type="eggNOG" id="COG0104">
    <property type="taxonomic scope" value="Bacteria"/>
</dbReference>
<dbReference type="HOGENOM" id="CLU_029848_0_0_5"/>
<dbReference type="BioCyc" id="RSPH349102:G1G8M-897-MONOMER"/>
<dbReference type="UniPathway" id="UPA00075">
    <property type="reaction ID" value="UER00335"/>
</dbReference>
<dbReference type="GO" id="GO:0005737">
    <property type="term" value="C:cytoplasm"/>
    <property type="evidence" value="ECO:0007669"/>
    <property type="project" value="UniProtKB-SubCell"/>
</dbReference>
<dbReference type="GO" id="GO:0004019">
    <property type="term" value="F:adenylosuccinate synthase activity"/>
    <property type="evidence" value="ECO:0007669"/>
    <property type="project" value="UniProtKB-UniRule"/>
</dbReference>
<dbReference type="GO" id="GO:0005525">
    <property type="term" value="F:GTP binding"/>
    <property type="evidence" value="ECO:0007669"/>
    <property type="project" value="UniProtKB-UniRule"/>
</dbReference>
<dbReference type="GO" id="GO:0000287">
    <property type="term" value="F:magnesium ion binding"/>
    <property type="evidence" value="ECO:0007669"/>
    <property type="project" value="UniProtKB-UniRule"/>
</dbReference>
<dbReference type="GO" id="GO:0044208">
    <property type="term" value="P:'de novo' AMP biosynthetic process"/>
    <property type="evidence" value="ECO:0007669"/>
    <property type="project" value="UniProtKB-UniRule"/>
</dbReference>
<dbReference type="GO" id="GO:0046040">
    <property type="term" value="P:IMP metabolic process"/>
    <property type="evidence" value="ECO:0007669"/>
    <property type="project" value="TreeGrafter"/>
</dbReference>
<dbReference type="CDD" id="cd03108">
    <property type="entry name" value="AdSS"/>
    <property type="match status" value="1"/>
</dbReference>
<dbReference type="FunFam" id="1.10.300.10:FF:000001">
    <property type="entry name" value="Adenylosuccinate synthetase"/>
    <property type="match status" value="1"/>
</dbReference>
<dbReference type="FunFam" id="3.90.170.10:FF:000001">
    <property type="entry name" value="Adenylosuccinate synthetase"/>
    <property type="match status" value="1"/>
</dbReference>
<dbReference type="Gene3D" id="3.40.440.10">
    <property type="entry name" value="Adenylosuccinate Synthetase, subunit A, domain 1"/>
    <property type="match status" value="1"/>
</dbReference>
<dbReference type="Gene3D" id="1.10.300.10">
    <property type="entry name" value="Adenylosuccinate Synthetase, subunit A, domain 2"/>
    <property type="match status" value="1"/>
</dbReference>
<dbReference type="Gene3D" id="3.90.170.10">
    <property type="entry name" value="Adenylosuccinate Synthetase, subunit A, domain 3"/>
    <property type="match status" value="1"/>
</dbReference>
<dbReference type="HAMAP" id="MF_00011">
    <property type="entry name" value="Adenylosucc_synth"/>
    <property type="match status" value="1"/>
</dbReference>
<dbReference type="InterPro" id="IPR018220">
    <property type="entry name" value="Adenylosuccin_syn_GTP-bd"/>
</dbReference>
<dbReference type="InterPro" id="IPR033128">
    <property type="entry name" value="Adenylosuccin_syn_Lys_AS"/>
</dbReference>
<dbReference type="InterPro" id="IPR042109">
    <property type="entry name" value="Adenylosuccinate_synth_dom1"/>
</dbReference>
<dbReference type="InterPro" id="IPR042110">
    <property type="entry name" value="Adenylosuccinate_synth_dom2"/>
</dbReference>
<dbReference type="InterPro" id="IPR042111">
    <property type="entry name" value="Adenylosuccinate_synth_dom3"/>
</dbReference>
<dbReference type="InterPro" id="IPR001114">
    <property type="entry name" value="Adenylosuccinate_synthetase"/>
</dbReference>
<dbReference type="InterPro" id="IPR027417">
    <property type="entry name" value="P-loop_NTPase"/>
</dbReference>
<dbReference type="NCBIfam" id="NF002223">
    <property type="entry name" value="PRK01117.1"/>
    <property type="match status" value="1"/>
</dbReference>
<dbReference type="NCBIfam" id="TIGR00184">
    <property type="entry name" value="purA"/>
    <property type="match status" value="1"/>
</dbReference>
<dbReference type="PANTHER" id="PTHR11846">
    <property type="entry name" value="ADENYLOSUCCINATE SYNTHETASE"/>
    <property type="match status" value="1"/>
</dbReference>
<dbReference type="PANTHER" id="PTHR11846:SF0">
    <property type="entry name" value="ADENYLOSUCCINATE SYNTHETASE"/>
    <property type="match status" value="1"/>
</dbReference>
<dbReference type="Pfam" id="PF00709">
    <property type="entry name" value="Adenylsucc_synt"/>
    <property type="match status" value="1"/>
</dbReference>
<dbReference type="SMART" id="SM00788">
    <property type="entry name" value="Adenylsucc_synt"/>
    <property type="match status" value="1"/>
</dbReference>
<dbReference type="SUPFAM" id="SSF52540">
    <property type="entry name" value="P-loop containing nucleoside triphosphate hydrolases"/>
    <property type="match status" value="1"/>
</dbReference>
<dbReference type="PROSITE" id="PS01266">
    <property type="entry name" value="ADENYLOSUCCIN_SYN_1"/>
    <property type="match status" value="1"/>
</dbReference>
<dbReference type="PROSITE" id="PS00513">
    <property type="entry name" value="ADENYLOSUCCIN_SYN_2"/>
    <property type="match status" value="1"/>
</dbReference>
<reference key="1">
    <citation type="submission" date="2007-04" db="EMBL/GenBank/DDBJ databases">
        <title>Complete sequence of chromosome of Rhodobacter sphaeroides ATCC 17025.</title>
        <authorList>
            <consortium name="US DOE Joint Genome Institute"/>
            <person name="Copeland A."/>
            <person name="Lucas S."/>
            <person name="Lapidus A."/>
            <person name="Barry K."/>
            <person name="Detter J.C."/>
            <person name="Glavina del Rio T."/>
            <person name="Hammon N."/>
            <person name="Israni S."/>
            <person name="Dalin E."/>
            <person name="Tice H."/>
            <person name="Pitluck S."/>
            <person name="Chertkov O."/>
            <person name="Brettin T."/>
            <person name="Bruce D."/>
            <person name="Han C."/>
            <person name="Schmutz J."/>
            <person name="Larimer F."/>
            <person name="Land M."/>
            <person name="Hauser L."/>
            <person name="Kyrpides N."/>
            <person name="Kim E."/>
            <person name="Richardson P."/>
            <person name="Mackenzie C."/>
            <person name="Choudhary M."/>
            <person name="Donohue T.J."/>
            <person name="Kaplan S."/>
        </authorList>
    </citation>
    <scope>NUCLEOTIDE SEQUENCE [LARGE SCALE GENOMIC DNA]</scope>
    <source>
        <strain>ATCC 17025 / ATH 2.4.3</strain>
    </source>
</reference>
<organism>
    <name type="scientific">Cereibacter sphaeroides (strain ATCC 17025 / ATH 2.4.3)</name>
    <name type="common">Rhodobacter sphaeroides</name>
    <dbReference type="NCBI Taxonomy" id="349102"/>
    <lineage>
        <taxon>Bacteria</taxon>
        <taxon>Pseudomonadati</taxon>
        <taxon>Pseudomonadota</taxon>
        <taxon>Alphaproteobacteria</taxon>
        <taxon>Rhodobacterales</taxon>
        <taxon>Paracoccaceae</taxon>
        <taxon>Cereibacter</taxon>
    </lineage>
</organism>
<proteinExistence type="inferred from homology"/>
<keyword id="KW-0963">Cytoplasm</keyword>
<keyword id="KW-0342">GTP-binding</keyword>
<keyword id="KW-0436">Ligase</keyword>
<keyword id="KW-0460">Magnesium</keyword>
<keyword id="KW-0479">Metal-binding</keyword>
<keyword id="KW-0547">Nucleotide-binding</keyword>
<keyword id="KW-0658">Purine biosynthesis</keyword>